<sequence>MSRRAGTPTAKKVTQLVNVEEHVEGFRQVREAHRRELIDDYVELISDLIREVGEARQVDMAARLGVSQPTVAKMLKRLATMGLIEMIPWRGVFLTAEGEKLAQESRERHQIVENFLLVLGVSPEIARRDAEGMEHHVSEETLDAFRLFTQKHGAK</sequence>
<accession>P0A9F2</accession>
<accession>P75787</accession>
<comment type="function">
    <text evidence="1">In the presence of manganese, represses expression of mntH and mntS. Up-regulates expression of mntP (By similarity).</text>
</comment>
<comment type="subunit">
    <text evidence="1">Homodimer.</text>
</comment>
<comment type="subcellular location">
    <subcellularLocation>
        <location evidence="1">Cytoplasm</location>
    </subcellularLocation>
</comment>
<comment type="domain">
    <text evidence="1">It contains an N-terminal DNA-binding domain and a metal-binding domain.</text>
</comment>
<comment type="similarity">
    <text evidence="3">Belongs to the DtxR/MntR family.</text>
</comment>
<gene>
    <name type="primary">mntR</name>
    <name type="ordered locus">c0903</name>
</gene>
<keyword id="KW-0010">Activator</keyword>
<keyword id="KW-0963">Cytoplasm</keyword>
<keyword id="KW-0238">DNA-binding</keyword>
<keyword id="KW-0464">Manganese</keyword>
<keyword id="KW-1185">Reference proteome</keyword>
<keyword id="KW-0678">Repressor</keyword>
<keyword id="KW-0804">Transcription</keyword>
<keyword id="KW-0805">Transcription regulation</keyword>
<proteinExistence type="inferred from homology"/>
<protein>
    <recommendedName>
        <fullName>Transcriptional regulator MntR</fullName>
    </recommendedName>
    <alternativeName>
        <fullName>Manganese transport regulator</fullName>
    </alternativeName>
</protein>
<reference key="1">
    <citation type="journal article" date="2002" name="Proc. Natl. Acad. Sci. U.S.A.">
        <title>Extensive mosaic structure revealed by the complete genome sequence of uropathogenic Escherichia coli.</title>
        <authorList>
            <person name="Welch R.A."/>
            <person name="Burland V."/>
            <person name="Plunkett G. III"/>
            <person name="Redford P."/>
            <person name="Roesch P."/>
            <person name="Rasko D."/>
            <person name="Buckles E.L."/>
            <person name="Liou S.-R."/>
            <person name="Boutin A."/>
            <person name="Hackett J."/>
            <person name="Stroud D."/>
            <person name="Mayhew G.F."/>
            <person name="Rose D.J."/>
            <person name="Zhou S."/>
            <person name="Schwartz D.C."/>
            <person name="Perna N.T."/>
            <person name="Mobley H.L.T."/>
            <person name="Donnenberg M.S."/>
            <person name="Blattner F.R."/>
        </authorList>
    </citation>
    <scope>NUCLEOTIDE SEQUENCE [LARGE SCALE GENOMIC DNA]</scope>
    <source>
        <strain>CFT073 / ATCC 700928 / UPEC</strain>
    </source>
</reference>
<name>MNTR_ECOL6</name>
<organism>
    <name type="scientific">Escherichia coli O6:H1 (strain CFT073 / ATCC 700928 / UPEC)</name>
    <dbReference type="NCBI Taxonomy" id="199310"/>
    <lineage>
        <taxon>Bacteria</taxon>
        <taxon>Pseudomonadati</taxon>
        <taxon>Pseudomonadota</taxon>
        <taxon>Gammaproteobacteria</taxon>
        <taxon>Enterobacterales</taxon>
        <taxon>Enterobacteriaceae</taxon>
        <taxon>Escherichia</taxon>
    </lineage>
</organism>
<feature type="chain" id="PRO_0000201112" description="Transcriptional regulator MntR">
    <location>
        <begin position="1"/>
        <end position="155"/>
    </location>
</feature>
<feature type="domain" description="HTH dtxR-type" evidence="2">
    <location>
        <begin position="34"/>
        <end position="95"/>
    </location>
</feature>
<dbReference type="EMBL" id="AE014075">
    <property type="protein sequence ID" value="AAN79376.1"/>
    <property type="molecule type" value="Genomic_DNA"/>
</dbReference>
<dbReference type="RefSeq" id="WP_000091016.1">
    <property type="nucleotide sequence ID" value="NZ_CP051263.1"/>
</dbReference>
<dbReference type="SMR" id="P0A9F2"/>
<dbReference type="STRING" id="199310.c0903"/>
<dbReference type="GeneID" id="93776610"/>
<dbReference type="KEGG" id="ecc:c0903"/>
<dbReference type="eggNOG" id="COG1321">
    <property type="taxonomic scope" value="Bacteria"/>
</dbReference>
<dbReference type="HOGENOM" id="CLU_069532_2_0_6"/>
<dbReference type="BioCyc" id="ECOL199310:C0903-MONOMER"/>
<dbReference type="Proteomes" id="UP000001410">
    <property type="component" value="Chromosome"/>
</dbReference>
<dbReference type="GO" id="GO:0005737">
    <property type="term" value="C:cytoplasm"/>
    <property type="evidence" value="ECO:0007669"/>
    <property type="project" value="UniProtKB-SubCell"/>
</dbReference>
<dbReference type="GO" id="GO:0003677">
    <property type="term" value="F:DNA binding"/>
    <property type="evidence" value="ECO:0007669"/>
    <property type="project" value="UniProtKB-KW"/>
</dbReference>
<dbReference type="GO" id="GO:0003700">
    <property type="term" value="F:DNA-binding transcription factor activity"/>
    <property type="evidence" value="ECO:0007669"/>
    <property type="project" value="InterPro"/>
</dbReference>
<dbReference type="GO" id="GO:0046983">
    <property type="term" value="F:protein dimerization activity"/>
    <property type="evidence" value="ECO:0007669"/>
    <property type="project" value="InterPro"/>
</dbReference>
<dbReference type="GO" id="GO:0046914">
    <property type="term" value="F:transition metal ion binding"/>
    <property type="evidence" value="ECO:0007669"/>
    <property type="project" value="InterPro"/>
</dbReference>
<dbReference type="FunFam" id="1.10.10.10:FF:000108">
    <property type="entry name" value="Mn-dependent transcriptional regulator MntR"/>
    <property type="match status" value="1"/>
</dbReference>
<dbReference type="FunFam" id="1.10.60.10:FF:000002">
    <property type="entry name" value="Mn-dependent transcriptional regulator MntR"/>
    <property type="match status" value="1"/>
</dbReference>
<dbReference type="Gene3D" id="1.10.60.10">
    <property type="entry name" value="Iron dependent repressor, metal binding and dimerisation domain"/>
    <property type="match status" value="1"/>
</dbReference>
<dbReference type="Gene3D" id="1.10.10.10">
    <property type="entry name" value="Winged helix-like DNA-binding domain superfamily/Winged helix DNA-binding domain"/>
    <property type="match status" value="1"/>
</dbReference>
<dbReference type="InterPro" id="IPR050536">
    <property type="entry name" value="DtxR_MntR_Metal-Reg"/>
</dbReference>
<dbReference type="InterPro" id="IPR001367">
    <property type="entry name" value="Fe_dep_repressor"/>
</dbReference>
<dbReference type="InterPro" id="IPR036421">
    <property type="entry name" value="Fe_dep_repressor_sf"/>
</dbReference>
<dbReference type="InterPro" id="IPR022687">
    <property type="entry name" value="HTH_DTXR"/>
</dbReference>
<dbReference type="InterPro" id="IPR022689">
    <property type="entry name" value="Iron_dep_repressor"/>
</dbReference>
<dbReference type="InterPro" id="IPR036388">
    <property type="entry name" value="WH-like_DNA-bd_sf"/>
</dbReference>
<dbReference type="InterPro" id="IPR036390">
    <property type="entry name" value="WH_DNA-bd_sf"/>
</dbReference>
<dbReference type="NCBIfam" id="NF008273">
    <property type="entry name" value="PRK11050.1"/>
    <property type="match status" value="1"/>
</dbReference>
<dbReference type="PANTHER" id="PTHR33238">
    <property type="entry name" value="IRON (METAL) DEPENDENT REPRESSOR, DTXR FAMILY"/>
    <property type="match status" value="1"/>
</dbReference>
<dbReference type="PANTHER" id="PTHR33238:SF11">
    <property type="entry name" value="TRANSCRIPTIONAL REGULATOR MNTR"/>
    <property type="match status" value="1"/>
</dbReference>
<dbReference type="Pfam" id="PF02742">
    <property type="entry name" value="Fe_dep_repr_C"/>
    <property type="match status" value="1"/>
</dbReference>
<dbReference type="Pfam" id="PF01325">
    <property type="entry name" value="Fe_dep_repress"/>
    <property type="match status" value="1"/>
</dbReference>
<dbReference type="SMART" id="SM00529">
    <property type="entry name" value="HTH_DTXR"/>
    <property type="match status" value="1"/>
</dbReference>
<dbReference type="SUPFAM" id="SSF47979">
    <property type="entry name" value="Iron-dependent repressor protein, dimerization domain"/>
    <property type="match status" value="1"/>
</dbReference>
<dbReference type="SUPFAM" id="SSF46785">
    <property type="entry name" value="Winged helix' DNA-binding domain"/>
    <property type="match status" value="1"/>
</dbReference>
<dbReference type="PROSITE" id="PS50944">
    <property type="entry name" value="HTH_DTXR"/>
    <property type="match status" value="1"/>
</dbReference>
<evidence type="ECO:0000250" key="1"/>
<evidence type="ECO:0000255" key="2">
    <source>
        <dbReference type="PROSITE-ProRule" id="PRU00296"/>
    </source>
</evidence>
<evidence type="ECO:0000305" key="3"/>